<gene>
    <name evidence="1" type="primary">env</name>
</gene>
<comment type="function">
    <molecule>Envelope glycoprotein gp160</molecule>
    <text evidence="1">Oligomerizes in the host endoplasmic reticulum into predominantly trimers. In a second time, gp160 transits in the host Golgi, where glycosylation is completed. The precursor is then proteolytically cleaved in the trans-Golgi and thereby activated by cellular furin or furin-like proteases to produce gp120 and gp41.</text>
</comment>
<comment type="function">
    <molecule>Surface protein gp120</molecule>
    <text evidence="1">Attaches the virus to the host lymphoid cell by binding to the primary receptor CD4. This interaction induces a structural rearrangement creating a high affinity binding site for a chemokine coreceptor like CXCR4 and/or CCR5. Acts as a ligand for CD209/DC-SIGN and CLEC4M/DC-SIGNR, which are respectively found on dendritic cells (DCs), and on endothelial cells of liver sinusoids and lymph node sinuses. These interactions allow capture of viral particles at mucosal surfaces by these cells and subsequent transmission to permissive cells. HIV subverts the migration properties of dendritic cells to gain access to CD4+ T-cells in lymph nodes. Virus transmission to permissive T-cells occurs either in trans (without DCs infection, through viral capture and transmission), or in cis (following DCs productive infection, through the usual CD4-gp120 interaction), thereby inducing a robust infection. In trans infection, bound virions remain infectious over days and it is proposed that they are not degraded, but protected in non-lysosomal acidic organelles within the DCs close to the cell membrane thus contributing to the viral infectious potential during DCs' migration from the periphery to the lymphoid tissues. On arrival at lymphoid tissues, intact virions recycle back to DCs' cell surface allowing virus transmission to CD4+ T-cells.</text>
</comment>
<comment type="function">
    <molecule>Transmembrane protein gp41</molecule>
    <text evidence="1">Acts as a class I viral fusion protein. Under the current model, the protein has at least 3 conformational states: pre-fusion native state, pre-hairpin intermediate state, and post-fusion hairpin state. During fusion of viral and target intracellular membranes, the coiled coil regions (heptad repeats) assume a trimer-of-hairpins structure, positioning the fusion peptide in close proximity to the C-terminal region of the ectodomain. The formation of this structure appears to drive apposition and subsequent fusion of viral and target cell membranes. Complete fusion occurs in host cell endosomes and is dynamin-dependent, however some lipid transfer might occur at the plasma membrane. The virus undergoes clathrin-dependent internalization long before endosomal fusion, thus minimizing the surface exposure of conserved viral epitopes during fusion and reducing the efficacy of inhibitors targeting these epitopes. Membranes fusion leads to delivery of the nucleocapsid into the cytoplasm.</text>
</comment>
<comment type="subunit">
    <molecule>Surface protein gp120</molecule>
    <text evidence="1">The mature envelope protein (Env) consists of a homotrimer of non-covalently associated gp120-gp41 heterodimers. The resulting complex protrudes from the virus surface as a spike. There seems to be as few as 10 spikes on the average virion. Interacts with host CD4, CCR5 and CXCR4. Gp120 also interacts with the C-type lectins CD209/DC-SIGN and CLEC4M/DC-SIGNR (collectively referred to as DC-SIGN(R)). Gp120 and gp41 interact with GalCer. Gp120 interacts with host ITGA4/ITGB7 complex; on CD4+ T-cells, this interaction results in rapid activation of integrin ITGAL/LFA-1, which facilitates efficient cell-to-cell spreading of HIV-1. Gp120 interacts with cell-associated heparan sulfate; this interaction increases virus infectivity on permissive cells and may be involved in infection of CD4- cells.</text>
</comment>
<comment type="subunit">
    <molecule>Transmembrane protein gp41</molecule>
    <text evidence="1">The mature envelope protein (Env) consists of a homotrimer of non-covalently associated gp120-gp41 heterodimers. The resulting complex protrudes from the virus surface as a spike. There seems to be as few as 10 spikes on the average virion.</text>
</comment>
<comment type="subcellular location">
    <molecule>Surface protein gp120</molecule>
    <subcellularLocation>
        <location evidence="1">Virion membrane</location>
        <topology evidence="1">Peripheral membrane protein</topology>
    </subcellularLocation>
    <subcellularLocation>
        <location evidence="1">Host cell membrane</location>
        <topology evidence="1">Peripheral membrane protein</topology>
    </subcellularLocation>
    <subcellularLocation>
        <location evidence="1">Host endosome membrane</location>
        <topology evidence="1">Single-pass type I membrane protein</topology>
    </subcellularLocation>
    <text evidence="1">The surface protein is not anchored to the viral envelope, but associates with the extravirion surface through its binding to TM. It is probably concentrated at the site of budding and incorporated into the virions possibly by contacts between the cytoplasmic tail of Env and the N-terminus of Gag.</text>
</comment>
<comment type="subcellular location">
    <molecule>Transmembrane protein gp41</molecule>
    <subcellularLocation>
        <location evidence="1">Virion membrane</location>
        <topology evidence="1">Single-pass type I membrane protein</topology>
    </subcellularLocation>
    <subcellularLocation>
        <location evidence="1">Host cell membrane</location>
        <topology evidence="1">Single-pass type I membrane protein</topology>
    </subcellularLocation>
    <subcellularLocation>
        <location evidence="1">Host endosome membrane</location>
        <topology evidence="1">Single-pass type I membrane protein</topology>
    </subcellularLocation>
    <text evidence="1">It is probably concentrated at the site of budding and incorporated into the virions possibly by contacts between the cytoplasmic tail of Env and the N-terminus of Gag.</text>
</comment>
<comment type="domain">
    <text evidence="1">Some of the most genetically diverse regions of the viral genome are present in Env. They are called variable regions 1 through 5 (V1 through V5). Coreceptor usage of gp120 is determined mainly by the primary structure of the third variable region (V3) in the outer domain of gp120. The sequence of V3 determines which coreceptor, CCR5 and/or CXCR4 (corresponding to R5/macrophage, X4/T cell and R5X4/T cell and macrophage tropism), is used to trigger the fusion potential of the Env complex, and hence which cells the virus can infect. Binding to CCR5 involves a region adjacent in addition to V3.</text>
</comment>
<comment type="domain">
    <text evidence="1">The membrane proximal external region (MPER) present in gp41 is a tryptophan-rich region recognized by the antibodies 2F5, Z13, and 4E10. MPER seems to play a role in fusion.</text>
</comment>
<comment type="domain">
    <text evidence="1">The 17 amino acids long immunosuppressive region is present in many retroviral envelope proteins. Synthetic peptides derived from this relatively conserved sequence inhibit immune function in vitro and in vivo.</text>
</comment>
<comment type="domain">
    <text evidence="1">The YXXL motif is involved in determining the exact site of viral release at the surface of infected mononuclear cells and promotes endocytosis. YXXL and di-leucine endocytosis motifs interact directly or indirectly with the clathrin adapter complexes, opperate independently, and their activities are not additive.</text>
</comment>
<comment type="domain">
    <text evidence="1">The CD4-binding region is targeted by the antibody b12.</text>
</comment>
<comment type="PTM">
    <text evidence="1">Highly glycosylated by host. The high number of glycan on the protein is reffered to as 'glycan shield' because it contributes to hide protein sequence from adaptive immune system.</text>
</comment>
<comment type="PTM">
    <text evidence="1">Palmitoylation of the transmembrane protein and of Env polyprotein (prior to its proteolytic cleavage) is essential for their association with host cell membrane lipid rafts. Palmitoylation is therefore required for envelope trafficking to classical lipid rafts, but not for viral replication.</text>
</comment>
<comment type="PTM">
    <text evidence="1">Specific enzymatic cleavages in vivo yield mature proteins. Envelope glycoproteins are synthesized as an inactive precursor that is heavily N-glycosylated and processed likely by host cell furin in the Golgi to yield the mature SU and TM proteins. The cleavage site between SU and TM requires the minimal sequence [KR]-X-[KR]-R. About 2 of the 9 disulfide bonds of gp41 are reduced by P4HB/PDI, following binding to CD4 receptor.</text>
</comment>
<comment type="miscellaneous">
    <text evidence="1">Inhibitors targeting HIV-1 viral envelope proteins are used as antiretroviral drugs. Attachment of virions to the cell surface via non-specific interactions and CD4 binding can be blocked by inhibitors that include cyanovirin-N, cyclotriazadisulfonamide analogs, PRO 2000, TNX 355 and PRO 542. In addition, BMS 806 can block CD4-induced conformational changes. Env interactions with the coreceptor molecules can be targeted by CCR5 antagonists including SCH-D, maraviroc (UK 427857) and aplaviroc (GW 873140), and the CXCR4 antagonist AMD 070. Fusion of viral and cellular membranes can be inhibited by peptides such as enfuvirtide and tifuvirtide (T 1249). Resistance to inhibitors associated with mutations in Env are observed. Most of the time, single mutations confer only a modest reduction in drug susceptibility. Combination of several mutations is usually required to develop a high-level drug resistance.</text>
</comment>
<comment type="miscellaneous">
    <text evidence="1">HIV-1 lineages are divided in three main groups, M (for Major), O (for Outlier), and N (for New, or Non-M, Non-O). The vast majority of strains found worldwide belong to the group M. Group O seems to be endemic to and largely confined to Cameroon and neighboring countries in West Central Africa, where these viruses represent a small minority of HIV-1 strains. The group N is represented by a limited number of isolates from Cameroonian persons. The group M is further subdivided in 9 clades or subtypes (A to D, F to H, J and K).</text>
</comment>
<comment type="similarity">
    <text evidence="1">Belongs to the HIV-1 env protein family.</text>
</comment>
<comment type="online information" name="hivdb">
    <link uri="https://hivdb.stanford.edu"/>
    <text>HIV drug resistance database</text>
</comment>
<comment type="online information" name="HIV drug resistance mutations">
    <link uri="https://www.iasusa.org/hiv-drug-resistance/hiv-drug-resistance-mutations/"/>
</comment>
<dbReference type="EMBL" id="AF077336">
    <property type="protein sequence ID" value="AAD46094.1"/>
    <property type="molecule type" value="Genomic_DNA"/>
</dbReference>
<dbReference type="SMR" id="Q9QSQ7"/>
<dbReference type="GlyCosmos" id="Q9QSQ7">
    <property type="glycosylation" value="29 sites, No reported glycans"/>
</dbReference>
<dbReference type="Proteomes" id="UP000007418">
    <property type="component" value="Segment"/>
</dbReference>
<dbReference type="GO" id="GO:0044175">
    <property type="term" value="C:host cell endosome membrane"/>
    <property type="evidence" value="ECO:0007669"/>
    <property type="project" value="UniProtKB-SubCell"/>
</dbReference>
<dbReference type="GO" id="GO:0020002">
    <property type="term" value="C:host cell plasma membrane"/>
    <property type="evidence" value="ECO:0007669"/>
    <property type="project" value="UniProtKB-SubCell"/>
</dbReference>
<dbReference type="GO" id="GO:0016020">
    <property type="term" value="C:membrane"/>
    <property type="evidence" value="ECO:0007669"/>
    <property type="project" value="UniProtKB-UniRule"/>
</dbReference>
<dbReference type="GO" id="GO:0019031">
    <property type="term" value="C:viral envelope"/>
    <property type="evidence" value="ECO:0007669"/>
    <property type="project" value="UniProtKB-KW"/>
</dbReference>
<dbReference type="GO" id="GO:0055036">
    <property type="term" value="C:virion membrane"/>
    <property type="evidence" value="ECO:0007669"/>
    <property type="project" value="UniProtKB-SubCell"/>
</dbReference>
<dbReference type="GO" id="GO:0005198">
    <property type="term" value="F:structural molecule activity"/>
    <property type="evidence" value="ECO:0007669"/>
    <property type="project" value="UniProtKB-UniRule"/>
</dbReference>
<dbReference type="GO" id="GO:0075512">
    <property type="term" value="P:clathrin-dependent endocytosis of virus by host cell"/>
    <property type="evidence" value="ECO:0007669"/>
    <property type="project" value="UniProtKB-UniRule"/>
</dbReference>
<dbReference type="GO" id="GO:0039654">
    <property type="term" value="P:fusion of virus membrane with host endosome membrane"/>
    <property type="evidence" value="ECO:0007669"/>
    <property type="project" value="UniProtKB-UniRule"/>
</dbReference>
<dbReference type="GO" id="GO:0019064">
    <property type="term" value="P:fusion of virus membrane with host plasma membrane"/>
    <property type="evidence" value="ECO:0007669"/>
    <property type="project" value="UniProtKB-UniRule"/>
</dbReference>
<dbReference type="GO" id="GO:1903908">
    <property type="term" value="P:positive regulation of plasma membrane raft polarization"/>
    <property type="evidence" value="ECO:0007669"/>
    <property type="project" value="UniProtKB-UniRule"/>
</dbReference>
<dbReference type="GO" id="GO:1903911">
    <property type="term" value="P:positive regulation of receptor clustering"/>
    <property type="evidence" value="ECO:0007669"/>
    <property type="project" value="UniProtKB-UniRule"/>
</dbReference>
<dbReference type="GO" id="GO:0019082">
    <property type="term" value="P:viral protein processing"/>
    <property type="evidence" value="ECO:0007669"/>
    <property type="project" value="UniProtKB-UniRule"/>
</dbReference>
<dbReference type="GO" id="GO:0019062">
    <property type="term" value="P:virion attachment to host cell"/>
    <property type="evidence" value="ECO:0007669"/>
    <property type="project" value="UniProtKB-UniRule"/>
</dbReference>
<dbReference type="CDD" id="cd09909">
    <property type="entry name" value="HIV-1-like_HR1-HR2"/>
    <property type="match status" value="1"/>
</dbReference>
<dbReference type="FunFam" id="1.10.287.210:FF:000001">
    <property type="entry name" value="Envelope glycoprotein gp160"/>
    <property type="match status" value="1"/>
</dbReference>
<dbReference type="FunFam" id="1.20.5.490:FF:000001">
    <property type="entry name" value="Envelope glycoprotein gp160"/>
    <property type="match status" value="1"/>
</dbReference>
<dbReference type="FunFam" id="2.170.40.20:FF:000001">
    <property type="entry name" value="Envelope glycoprotein gp160"/>
    <property type="match status" value="1"/>
</dbReference>
<dbReference type="FunFam" id="2.170.40.20:FF:000003">
    <property type="entry name" value="Envelope glycoprotein gp160"/>
    <property type="match status" value="1"/>
</dbReference>
<dbReference type="Gene3D" id="1.10.287.210">
    <property type="match status" value="1"/>
</dbReference>
<dbReference type="Gene3D" id="2.170.40.20">
    <property type="entry name" value="Human immunodeficiency virus 1, Gp160, envelope glycoprotein"/>
    <property type="match status" value="2"/>
</dbReference>
<dbReference type="Gene3D" id="1.20.5.490">
    <property type="entry name" value="Single helix bin"/>
    <property type="match status" value="1"/>
</dbReference>
<dbReference type="HAMAP" id="MF_04083">
    <property type="entry name" value="HIV_ENV"/>
    <property type="match status" value="1"/>
</dbReference>
<dbReference type="InterPro" id="IPR036377">
    <property type="entry name" value="Gp120_core_sf"/>
</dbReference>
<dbReference type="InterPro" id="IPR037527">
    <property type="entry name" value="Gp160"/>
</dbReference>
<dbReference type="InterPro" id="IPR000328">
    <property type="entry name" value="GP41-like"/>
</dbReference>
<dbReference type="InterPro" id="IPR000777">
    <property type="entry name" value="HIV1_Gp120"/>
</dbReference>
<dbReference type="Pfam" id="PF00516">
    <property type="entry name" value="GP120"/>
    <property type="match status" value="2"/>
</dbReference>
<dbReference type="Pfam" id="PF00517">
    <property type="entry name" value="GP41"/>
    <property type="match status" value="1"/>
</dbReference>
<dbReference type="SUPFAM" id="SSF56502">
    <property type="entry name" value="gp120 core"/>
    <property type="match status" value="2"/>
</dbReference>
<dbReference type="SUPFAM" id="SSF58069">
    <property type="entry name" value="Virus ectodomain"/>
    <property type="match status" value="1"/>
</dbReference>
<feature type="signal peptide" evidence="1">
    <location>
        <begin position="1"/>
        <end position="31"/>
    </location>
</feature>
<feature type="chain" id="PRO_0000244690" description="Envelope glycoprotein gp160" evidence="1">
    <location>
        <begin position="32"/>
        <end position="832"/>
    </location>
</feature>
<feature type="chain" id="PRO_0000244691" description="Surface protein gp120" evidence="1">
    <location>
        <begin position="32"/>
        <end position="487"/>
    </location>
</feature>
<feature type="chain" id="PRO_0000244692" description="Transmembrane protein gp41" evidence="1">
    <location>
        <begin position="488"/>
        <end position="832"/>
    </location>
</feature>
<feature type="topological domain" description="Extracellular" evidence="1">
    <location>
        <begin position="32"/>
        <end position="660"/>
    </location>
</feature>
<feature type="transmembrane region" description="Helical" evidence="1">
    <location>
        <begin position="661"/>
        <end position="681"/>
    </location>
</feature>
<feature type="topological domain" description="Cytoplasmic" evidence="1">
    <location>
        <begin position="682"/>
        <end position="832"/>
    </location>
</feature>
<feature type="region of interest" description="V1" evidence="1">
    <location>
        <begin position="130"/>
        <end position="146"/>
    </location>
</feature>
<feature type="region of interest" description="V2" evidence="1">
    <location>
        <begin position="147"/>
        <end position="187"/>
    </location>
</feature>
<feature type="region of interest" description="V3" evidence="1">
    <location>
        <begin position="287"/>
        <end position="320"/>
    </location>
</feature>
<feature type="region of interest" description="CD4-binding loop" evidence="1">
    <location>
        <begin position="354"/>
        <end position="364"/>
    </location>
</feature>
<feature type="region of interest" description="V4" evidence="1">
    <location>
        <begin position="375"/>
        <end position="395"/>
    </location>
</feature>
<feature type="region of interest" description="V5" evidence="1">
    <location>
        <begin position="438"/>
        <end position="447"/>
    </location>
</feature>
<feature type="region of interest" description="Fusion peptide" evidence="1">
    <location>
        <begin position="488"/>
        <end position="508"/>
    </location>
</feature>
<feature type="region of interest" description="Immunosuppression" evidence="1">
    <location>
        <begin position="550"/>
        <end position="568"/>
    </location>
</feature>
<feature type="region of interest" description="MPER; binding to GalCer" evidence="1">
    <location>
        <begin position="638"/>
        <end position="659"/>
    </location>
</feature>
<feature type="region of interest" description="Disordered" evidence="2">
    <location>
        <begin position="695"/>
        <end position="717"/>
    </location>
</feature>
<feature type="coiled-coil region" evidence="1">
    <location>
        <begin position="609"/>
        <end position="643"/>
    </location>
</feature>
<feature type="short sequence motif" description="YXXL motif; contains endocytosis signal" evidence="1">
    <location>
        <begin position="688"/>
        <end position="691"/>
    </location>
</feature>
<feature type="short sequence motif" description="Di-leucine internalization motif" evidence="1">
    <location>
        <begin position="831"/>
        <end position="832"/>
    </location>
</feature>
<feature type="site" description="Cleavage; by host furin" evidence="1">
    <location>
        <begin position="487"/>
        <end position="488"/>
    </location>
</feature>
<feature type="lipid moiety-binding region" description="S-palmitoyl cysteine; by host" evidence="1">
    <location>
        <position position="740"/>
    </location>
</feature>
<feature type="glycosylation site" description="N-linked (GlcNAc...) asparagine; by host" evidence="1">
    <location>
        <position position="87"/>
    </location>
</feature>
<feature type="glycosylation site" description="N-linked (GlcNAc...) asparagine; by host" evidence="1">
    <location>
        <position position="129"/>
    </location>
</feature>
<feature type="glycosylation site" description="N-linked (GlcNAc...) asparagine; by host" evidence="1">
    <location>
        <position position="132"/>
    </location>
</feature>
<feature type="glycosylation site" description="N-linked (GlcNAc...) asparagine; by host" evidence="1">
    <location>
        <position position="135"/>
    </location>
</feature>
<feature type="glycosylation site" description="N-linked (GlcNAc...) asparagine; by host" evidence="1">
    <location>
        <position position="146"/>
    </location>
</feature>
<feature type="glycosylation site" description="N-linked (GlcNAc...) asparagine; by host" evidence="1">
    <location>
        <position position="150"/>
    </location>
</feature>
<feature type="glycosylation site" description="N-linked (GlcNAc...) asparagine; by host" evidence="1">
    <location>
        <position position="177"/>
    </location>
</feature>
<feature type="glycosylation site" description="N-linked (GlcNAc...) asparagine; by host" evidence="1">
    <location>
        <position position="178"/>
    </location>
</feature>
<feature type="glycosylation site" description="N-linked (GlcNAc...) asparagine; by host" evidence="1">
    <location>
        <position position="188"/>
    </location>
</feature>
<feature type="glycosylation site" description="N-linked (GlcNAc...) asparagine; by host" evidence="1">
    <location>
        <position position="225"/>
    </location>
</feature>
<feature type="glycosylation site" description="N-linked (GlcNAc...) asparagine; by host" evidence="1">
    <location>
        <position position="232"/>
    </location>
</feature>
<feature type="glycosylation site" description="N-linked (GlcNAc...) asparagine; by host" evidence="1">
    <location>
        <position position="253"/>
    </location>
</feature>
<feature type="glycosylation site" description="N-linked (GlcNAc...) asparagine; by host" evidence="1">
    <location>
        <position position="267"/>
    </location>
</feature>
<feature type="glycosylation site" description="N-linked (GlcNAc...) asparagine; by host" evidence="1">
    <location>
        <position position="280"/>
    </location>
</feature>
<feature type="glycosylation site" description="N-linked (GlcNAc...) asparagine; by host" evidence="1">
    <location>
        <position position="286"/>
    </location>
</feature>
<feature type="glycosylation site" description="N-linked (GlcNAc...) asparagine; by host" evidence="1">
    <location>
        <position position="292"/>
    </location>
</feature>
<feature type="glycosylation site" description="N-linked (GlcNAc...) asparagine; by host" evidence="1">
    <location>
        <position position="322"/>
    </location>
</feature>
<feature type="glycosylation site" description="N-linked (GlcNAc...) asparagine; by host" evidence="1">
    <location>
        <position position="329"/>
    </location>
</feature>
<feature type="glycosylation site" description="N-linked (GlcNAc...) asparagine; by host" evidence="1">
    <location>
        <position position="345"/>
    </location>
</feature>
<feature type="glycosylation site" description="N-linked (GlcNAc...) asparagine; by host" evidence="1">
    <location>
        <position position="352"/>
    </location>
</feature>
<feature type="glycosylation site" description="N-linked (GlcNAc...) asparagine; by host" evidence="1">
    <location>
        <position position="382"/>
    </location>
</feature>
<feature type="glycosylation site" description="N-linked (GlcNAc...) asparagine; by host" evidence="1">
    <location>
        <position position="388"/>
    </location>
</feature>
<feature type="glycosylation site" description="N-linked (GlcNAc...) asparagine; by host" evidence="1">
    <location>
        <position position="419"/>
    </location>
</feature>
<feature type="glycosylation site" description="N-linked (GlcNAc...) asparagine; by host" evidence="1">
    <location>
        <position position="425"/>
    </location>
</feature>
<feature type="glycosylation site" description="N-linked (GlcNAc...) asparagine; by host" evidence="1">
    <location>
        <position position="437"/>
    </location>
</feature>
<feature type="glycosylation site" description="N-linked (GlcNAc...) asparagine; by host" evidence="1">
    <location>
        <position position="587"/>
    </location>
</feature>
<feature type="glycosylation site" description="N-linked (GlcNAc...) asparagine; by host" evidence="1">
    <location>
        <position position="592"/>
    </location>
</feature>
<feature type="glycosylation site" description="N-linked (GlcNAc...) asparagine; by host" evidence="1">
    <location>
        <position position="601"/>
    </location>
</feature>
<feature type="glycosylation site" description="N-linked (GlcNAc...) asparagine; by host" evidence="1">
    <location>
        <position position="613"/>
    </location>
</feature>
<feature type="disulfide bond" evidence="1">
    <location>
        <begin position="53"/>
        <end position="73"/>
    </location>
</feature>
<feature type="disulfide bond" evidence="1">
    <location>
        <begin position="118"/>
        <end position="196"/>
    </location>
</feature>
<feature type="disulfide bond" evidence="1">
    <location>
        <begin position="125"/>
        <end position="187"/>
    </location>
</feature>
<feature type="disulfide bond" evidence="1">
    <location>
        <begin position="130"/>
        <end position="147"/>
    </location>
</feature>
<feature type="disulfide bond" evidence="1">
    <location>
        <begin position="209"/>
        <end position="238"/>
    </location>
</feature>
<feature type="disulfide bond" evidence="1">
    <location>
        <begin position="219"/>
        <end position="230"/>
    </location>
</feature>
<feature type="disulfide bond" evidence="1">
    <location>
        <begin position="287"/>
        <end position="321"/>
    </location>
</feature>
<feature type="disulfide bond" evidence="1">
    <location>
        <begin position="368"/>
        <end position="422"/>
    </location>
</feature>
<feature type="disulfide bond" evidence="1">
    <location>
        <begin position="375"/>
        <end position="395"/>
    </location>
</feature>
<feature type="disulfide bond" evidence="1">
    <location>
        <begin position="574"/>
        <end position="580"/>
    </location>
</feature>
<organism>
    <name type="scientific">Human immunodeficiency virus type 1 group M subtype F1 (isolate VI850)</name>
    <name type="common">HIV-1</name>
    <dbReference type="NCBI Taxonomy" id="388813"/>
    <lineage>
        <taxon>Viruses</taxon>
        <taxon>Riboviria</taxon>
        <taxon>Pararnavirae</taxon>
        <taxon>Artverviricota</taxon>
        <taxon>Revtraviricetes</taxon>
        <taxon>Ortervirales</taxon>
        <taxon>Retroviridae</taxon>
        <taxon>Orthoretrovirinae</taxon>
        <taxon>Lentivirus</taxon>
        <taxon>Human immunodeficiency virus type 1</taxon>
    </lineage>
</organism>
<organismHost>
    <name type="scientific">Homo sapiens</name>
    <name type="common">Human</name>
    <dbReference type="NCBI Taxonomy" id="9606"/>
</organismHost>
<accession>Q9QSQ7</accession>
<keyword id="KW-0014">AIDS</keyword>
<keyword id="KW-0053">Apoptosis</keyword>
<keyword id="KW-1165">Clathrin-mediated endocytosis of virus by host</keyword>
<keyword id="KW-0165">Cleavage on pair of basic residues</keyword>
<keyword id="KW-0175">Coiled coil</keyword>
<keyword id="KW-1015">Disulfide bond</keyword>
<keyword id="KW-1170">Fusion of virus membrane with host endosomal membrane</keyword>
<keyword id="KW-1168">Fusion of virus membrane with host membrane</keyword>
<keyword id="KW-0325">Glycoprotein</keyword>
<keyword id="KW-1032">Host cell membrane</keyword>
<keyword id="KW-1039">Host endosome</keyword>
<keyword id="KW-1043">Host membrane</keyword>
<keyword id="KW-0945">Host-virus interaction</keyword>
<keyword id="KW-0449">Lipoprotein</keyword>
<keyword id="KW-0472">Membrane</keyword>
<keyword id="KW-0564">Palmitate</keyword>
<keyword id="KW-1185">Reference proteome</keyword>
<keyword id="KW-0732">Signal</keyword>
<keyword id="KW-0812">Transmembrane</keyword>
<keyword id="KW-1133">Transmembrane helix</keyword>
<keyword id="KW-1161">Viral attachment to host cell</keyword>
<keyword id="KW-0261">Viral envelope protein</keyword>
<keyword id="KW-0899">Viral immunoevasion</keyword>
<keyword id="KW-1162">Viral penetration into host cytoplasm</keyword>
<keyword id="KW-0946">Virion</keyword>
<keyword id="KW-1164">Virus endocytosis by host</keyword>
<keyword id="KW-1160">Virus entry into host cell</keyword>
<name>ENV_HV1VI</name>
<protein>
    <recommendedName>
        <fullName evidence="1">Envelope glycoprotein gp160</fullName>
    </recommendedName>
    <alternativeName>
        <fullName evidence="1">Env polyprotein</fullName>
    </alternativeName>
    <component>
        <recommendedName>
            <fullName evidence="1">Surface protein gp120</fullName>
            <shortName evidence="1">SU</shortName>
        </recommendedName>
        <alternativeName>
            <fullName evidence="1">Glycoprotein 120</fullName>
            <shortName evidence="1">gp120</shortName>
        </alternativeName>
    </component>
    <component>
        <recommendedName>
            <fullName evidence="1">Transmembrane protein gp41</fullName>
            <shortName evidence="1">TM</shortName>
        </recommendedName>
        <alternativeName>
            <fullName evidence="1">Glycoprotein 41</fullName>
            <shortName evidence="1">gp41</shortName>
        </alternativeName>
    </component>
</protein>
<evidence type="ECO:0000255" key="1">
    <source>
        <dbReference type="HAMAP-Rule" id="MF_04083"/>
    </source>
</evidence>
<evidence type="ECO:0000256" key="2">
    <source>
        <dbReference type="SAM" id="MobiDB-lite"/>
    </source>
</evidence>
<proteinExistence type="inferred from homology"/>
<reference key="1">
    <citation type="journal article" date="2000" name="Virology">
        <title>Virtually full-length subtype F and F/D recombinant HIV-1 from Africa and South America.</title>
        <authorList>
            <person name="Laukkanen T."/>
            <person name="Carr J.K."/>
            <person name="Janssens W."/>
            <person name="Liitsola K."/>
            <person name="Gotte D."/>
            <person name="McCutchan F.E."/>
            <person name="Op de Coul E."/>
            <person name="Cornelissen M."/>
            <person name="Heyndrickx L."/>
            <person name="van der Groen G."/>
            <person name="Salminen M.O."/>
        </authorList>
    </citation>
    <scope>NUCLEOTIDE SEQUENCE [GENOMIC DNA]</scope>
</reference>
<reference key="2">
    <citation type="journal article" date="2003" name="APMIS">
        <title>Pathogens target DC-SIGN to influence their fate DC-SIGN functions as a pathogen receptor with broad specificity.</title>
        <authorList>
            <person name="Geijtenbeek T.B."/>
            <person name="van Kooyk Y."/>
        </authorList>
    </citation>
    <scope>REVIEW</scope>
</reference>
<reference key="3">
    <citation type="journal article" date="2003" name="Biochim. Biophys. Acta">
        <title>The HIV Env-mediated fusion reaction.</title>
        <authorList>
            <person name="Gallo S.A."/>
            <person name="Finnegan C.M."/>
            <person name="Viard M."/>
            <person name="Raviv Y."/>
            <person name="Dimitrov A."/>
            <person name="Rawat S.S."/>
            <person name="Puri A."/>
            <person name="Durell S."/>
            <person name="Blumenthal R."/>
        </authorList>
    </citation>
    <scope>REVIEW</scope>
</reference>
<reference key="4">
    <citation type="journal article" date="2005" name="Cell Death Differ.">
        <title>Mechanisms of apoptosis induction by the HIV-1 envelope.</title>
        <authorList>
            <person name="Perfettini J.-L."/>
            <person name="Castedo M."/>
            <person name="Roumier T."/>
            <person name="Andreau K."/>
            <person name="Nardacci R."/>
            <person name="Piacentini M."/>
            <person name="Kroemer G."/>
        </authorList>
    </citation>
    <scope>REVIEW</scope>
</reference>
<reference key="5">
    <citation type="journal article" date="2005" name="AIDS Res. Hum. Retroviruses">
        <title>V3: HIV's switch-hitter.</title>
        <authorList>
            <person name="Hartley O."/>
            <person name="Klasse P.J."/>
            <person name="Sattentau Q.J."/>
            <person name="Moore J.P."/>
        </authorList>
    </citation>
    <scope>REVIEW</scope>
</reference>
<reference key="6">
    <citation type="journal article" date="2005" name="Drugs">
        <title>Emerging drug targets for antiretroviral therapy.</title>
        <authorList>
            <person name="Reeves J.D."/>
            <person name="Piefer A.J."/>
        </authorList>
    </citation>
    <scope>REVIEW</scope>
</reference>
<reference key="7">
    <citation type="journal article" date="2006" name="EMBO J.">
        <title>HIV and the chemokine system: 10 years later.</title>
        <authorList>
            <person name="Lusso P."/>
        </authorList>
    </citation>
    <scope>REVIEW</scope>
</reference>
<sequence>MRVRGMQRNWQHLGKWGLLFLGILIICNAADNLWVTVYYGVPVWKEATTTLFCASDAKAYEREAHNVWATHACVPTDPNPQEVFLKNVTENFDMWKNNMVEQMHTDIISLWDQSLKPCVKLTPLCVTLNCTNATNNSQEKPGAMQNCSFNMTTEVRDKKLKLSALFYRLDIVPIGNNNSSEYRLINCNTSTITQACPKVSWDPIPIHYCAPAGYAILKCNDKRFNGTGPCKNVSTVQCTHGIKPVVSTQLLLNGSLAEEGIVIRSQNISNNAKTIIVHLNESVQINCTRPNNNTRKGIHLGPGQTFYATGAIIGDIRKAHCNISGTQWNNTLEYVKAELKSHFPNNTAIKFNQSSGGDLEITMHSFNCRGEFFYCDTSGLFNDTGSNNGTITLPCRIKQIVNMWQGVGRAMYTSPIAGNITCNSNITGLLLTRDGGNESNIETFRPEGGNMKDNWRSELYKYKVVEIEPLGVAPTKAKRQVVQREKRAAGLGALFLGFLGDSREHMGAASITLTVQARQLLSGIVQQQNNLLRAIEAQQHLLQLTVWGIKQLQARVLAVERYLKDQQLLGIWGCSGKLICTTNVPWNSSWSNKSQEEIWNNMTWMEWEKEISNYSNIIYKLIEESQNQQEKNEQELLALDKWASLWNWFDISNWLWYIKIFIMIVGGLIGLRIVFAVLSIVNRVRKGYSPLSLQTLIPSPRGPDRPEGIEEGGGEQGKDRSVRLVTGFLALAWDDLRNLCLFSYRHLRDFILIAARIVDRGLRRGWEALKYLGNLTRYWSQELKNSAISLFNTTAIVVAEGTDRIIEVLQRAGRAVLNIPRRIRQGAERALL</sequence>